<accession>P0CG28</accession>
<reference key="1">
    <citation type="journal article" date="2002" name="Genome Res.">
        <title>The genome of Methanosarcina acetivorans reveals extensive metabolic and physiological diversity.</title>
        <authorList>
            <person name="Galagan J.E."/>
            <person name="Nusbaum C."/>
            <person name="Roy A."/>
            <person name="Endrizzi M.G."/>
            <person name="Macdonald P."/>
            <person name="FitzHugh W."/>
            <person name="Calvo S."/>
            <person name="Engels R."/>
            <person name="Smirnov S."/>
            <person name="Atnoor D."/>
            <person name="Brown A."/>
            <person name="Allen N."/>
            <person name="Naylor J."/>
            <person name="Stange-Thomann N."/>
            <person name="DeArellano K."/>
            <person name="Johnson R."/>
            <person name="Linton L."/>
            <person name="McEwan P."/>
            <person name="McKernan K."/>
            <person name="Talamas J."/>
            <person name="Tirrell A."/>
            <person name="Ye W."/>
            <person name="Zimmer A."/>
            <person name="Barber R.D."/>
            <person name="Cann I."/>
            <person name="Graham D.E."/>
            <person name="Grahame D.A."/>
            <person name="Guss A.M."/>
            <person name="Hedderich R."/>
            <person name="Ingram-Smith C."/>
            <person name="Kuettner H.C."/>
            <person name="Krzycki J.A."/>
            <person name="Leigh J.A."/>
            <person name="Li W."/>
            <person name="Liu J."/>
            <person name="Mukhopadhyay B."/>
            <person name="Reeve J.N."/>
            <person name="Smith K."/>
            <person name="Springer T.A."/>
            <person name="Umayam L.A."/>
            <person name="White O."/>
            <person name="White R.H."/>
            <person name="de Macario E.C."/>
            <person name="Ferry J.G."/>
            <person name="Jarrell K.F."/>
            <person name="Jing H."/>
            <person name="Macario A.J.L."/>
            <person name="Paulsen I.T."/>
            <person name="Pritchett M."/>
            <person name="Sowers K.R."/>
            <person name="Swanson R.V."/>
            <person name="Zinder S.H."/>
            <person name="Lander E."/>
            <person name="Metcalf W.W."/>
            <person name="Birren B."/>
        </authorList>
    </citation>
    <scope>NUCLEOTIDE SEQUENCE [LARGE SCALE GENOMIC DNA]</scope>
    <source>
        <strain>ATCC 35395 / DSM 2834 / JCM 12185 / C2A</strain>
    </source>
</reference>
<protein>
    <recommendedName>
        <fullName evidence="1">DNA-directed RNA polymerase subunit Rpo3</fullName>
        <ecNumber evidence="1">2.7.7.6</ecNumber>
    </recommendedName>
    <alternativeName>
        <fullName evidence="1">DNA-directed RNA polymerase subunit D</fullName>
    </alternativeName>
</protein>
<organism>
    <name type="scientific">Methanosarcina acetivorans (strain ATCC 35395 / DSM 2834 / JCM 12185 / C2A)</name>
    <dbReference type="NCBI Taxonomy" id="188937"/>
    <lineage>
        <taxon>Archaea</taxon>
        <taxon>Methanobacteriati</taxon>
        <taxon>Methanobacteriota</taxon>
        <taxon>Stenosarchaea group</taxon>
        <taxon>Methanomicrobia</taxon>
        <taxon>Methanosarcinales</taxon>
        <taxon>Methanosarcinaceae</taxon>
        <taxon>Methanosarcina</taxon>
    </lineage>
</organism>
<evidence type="ECO:0000255" key="1">
    <source>
        <dbReference type="HAMAP-Rule" id="MF_00320"/>
    </source>
</evidence>
<evidence type="ECO:0000305" key="2"/>
<proteinExistence type="inferred from homology"/>
<sequence>MTMEVDILELSDRSAKFVLSNVSTAFANGIRRAMVADVPTLAIEYVNLYDNTSVLYDEQLALRLSLIPLATDIETYLPQAECDVCGGEGCPACEVSLTLSAEGPGTVYSRDLISSDPKIQPADPNVPIVELKKGQKLVLEAIAHMGYGRDSVKWQAGVACGYKNMPVITIENCDACGHCAAECPKGIISVEEAGAKIAEEDIMKCSICRLCEQVCDINAIKVDFYENSFVFTMESDGSYTAKDLVLNAANVIKGKAEEMLAILDQL</sequence>
<feature type="chain" id="PRO_0000395338" description="DNA-directed RNA polymerase subunit Rpo3">
    <location>
        <begin position="1"/>
        <end position="266"/>
    </location>
</feature>
<feature type="binding site" evidence="1">
    <location>
        <position position="205"/>
    </location>
    <ligand>
        <name>[3Fe-4S] cluster</name>
        <dbReference type="ChEBI" id="CHEBI:21137"/>
    </ligand>
</feature>
<feature type="binding site" evidence="1">
    <location>
        <position position="208"/>
    </location>
    <ligand>
        <name>[3Fe-4S] cluster</name>
        <dbReference type="ChEBI" id="CHEBI:21137"/>
    </ligand>
</feature>
<feature type="binding site" evidence="1">
    <location>
        <position position="211"/>
    </location>
    <ligand>
        <name>[3Fe-4S] cluster</name>
        <dbReference type="ChEBI" id="CHEBI:21137"/>
    </ligand>
</feature>
<keyword id="KW-0003">3Fe-4S</keyword>
<keyword id="KW-0963">Cytoplasm</keyword>
<keyword id="KW-0240">DNA-directed RNA polymerase</keyword>
<keyword id="KW-0408">Iron</keyword>
<keyword id="KW-0411">Iron-sulfur</keyword>
<keyword id="KW-0479">Metal-binding</keyword>
<keyword id="KW-0548">Nucleotidyltransferase</keyword>
<keyword id="KW-1185">Reference proteome</keyword>
<keyword id="KW-0804">Transcription</keyword>
<keyword id="KW-0808">Transferase</keyword>
<name>RPO3_METAC</name>
<gene>
    <name evidence="1" type="primary">rpo3</name>
    <name evidence="1" type="synonym">rpoD</name>
    <name type="ordered locus">MA_1111</name>
</gene>
<comment type="function">
    <text evidence="1">DNA-dependent RNA polymerase (RNAP) catalyzes the transcription of DNA into RNA using the four ribonucleoside triphosphates as substrates.</text>
</comment>
<comment type="catalytic activity">
    <reaction evidence="1">
        <text>RNA(n) + a ribonucleoside 5'-triphosphate = RNA(n+1) + diphosphate</text>
        <dbReference type="Rhea" id="RHEA:21248"/>
        <dbReference type="Rhea" id="RHEA-COMP:14527"/>
        <dbReference type="Rhea" id="RHEA-COMP:17342"/>
        <dbReference type="ChEBI" id="CHEBI:33019"/>
        <dbReference type="ChEBI" id="CHEBI:61557"/>
        <dbReference type="ChEBI" id="CHEBI:140395"/>
        <dbReference type="EC" id="2.7.7.6"/>
    </reaction>
</comment>
<comment type="cofactor">
    <cofactor evidence="1">
        <name>[3Fe-4S] cluster</name>
        <dbReference type="ChEBI" id="CHEBI:21137"/>
    </cofactor>
    <text evidence="1">Binds 1 [3Fe-4S] cluster.</text>
</comment>
<comment type="subunit">
    <text evidence="1">Part of the RNA polymerase complex.</text>
</comment>
<comment type="subcellular location">
    <subcellularLocation>
        <location evidence="1">Cytoplasm</location>
    </subcellularLocation>
</comment>
<comment type="similarity">
    <text evidence="1">Belongs to the archaeal Rpo3/eukaryotic RPB3 RNA polymerase subunit family.</text>
</comment>
<comment type="caution">
    <text evidence="2">X-ray crystallography in other archaea shows this protein binds a 3Fe-4S cluster, although a 4Fe-4S cluster has been suggested to be present in this protein.</text>
</comment>
<comment type="sequence caution" evidence="2">
    <conflict type="frameshift">
        <sequence resource="EMBL" id="AE010299"/>
    </conflict>
</comment>
<dbReference type="EC" id="2.7.7.6" evidence="1"/>
<dbReference type="EMBL" id="AE010299">
    <property type="status" value="NOT_ANNOTATED_CDS"/>
    <property type="molecule type" value="Genomic_DNA"/>
</dbReference>
<dbReference type="SMR" id="P0CG28"/>
<dbReference type="InParanoid" id="P0CG28"/>
<dbReference type="PhylomeDB" id="P0CG28"/>
<dbReference type="Proteomes" id="UP000002487">
    <property type="component" value="Chromosome"/>
</dbReference>
<dbReference type="GO" id="GO:0005737">
    <property type="term" value="C:cytoplasm"/>
    <property type="evidence" value="ECO:0007669"/>
    <property type="project" value="UniProtKB-SubCell"/>
</dbReference>
<dbReference type="GO" id="GO:0000428">
    <property type="term" value="C:DNA-directed RNA polymerase complex"/>
    <property type="evidence" value="ECO:0007669"/>
    <property type="project" value="UniProtKB-KW"/>
</dbReference>
<dbReference type="GO" id="GO:0051538">
    <property type="term" value="F:3 iron, 4 sulfur cluster binding"/>
    <property type="evidence" value="ECO:0007669"/>
    <property type="project" value="UniProtKB-KW"/>
</dbReference>
<dbReference type="GO" id="GO:0003677">
    <property type="term" value="F:DNA binding"/>
    <property type="evidence" value="ECO:0007669"/>
    <property type="project" value="UniProtKB-UniRule"/>
</dbReference>
<dbReference type="GO" id="GO:0003899">
    <property type="term" value="F:DNA-directed RNA polymerase activity"/>
    <property type="evidence" value="ECO:0007669"/>
    <property type="project" value="UniProtKB-UniRule"/>
</dbReference>
<dbReference type="GO" id="GO:0046872">
    <property type="term" value="F:metal ion binding"/>
    <property type="evidence" value="ECO:0007669"/>
    <property type="project" value="UniProtKB-KW"/>
</dbReference>
<dbReference type="GO" id="GO:0016491">
    <property type="term" value="F:oxidoreductase activity"/>
    <property type="evidence" value="ECO:0007669"/>
    <property type="project" value="UniProtKB-ARBA"/>
</dbReference>
<dbReference type="GO" id="GO:0046983">
    <property type="term" value="F:protein dimerization activity"/>
    <property type="evidence" value="ECO:0007669"/>
    <property type="project" value="InterPro"/>
</dbReference>
<dbReference type="GO" id="GO:0006351">
    <property type="term" value="P:DNA-templated transcription"/>
    <property type="evidence" value="ECO:0007669"/>
    <property type="project" value="UniProtKB-UniRule"/>
</dbReference>
<dbReference type="CDD" id="cd07030">
    <property type="entry name" value="RNAP_D"/>
    <property type="match status" value="1"/>
</dbReference>
<dbReference type="Gene3D" id="3.30.70.3110">
    <property type="match status" value="1"/>
</dbReference>
<dbReference type="Gene3D" id="2.170.120.12">
    <property type="entry name" value="DNA-directed RNA polymerase, insert domain"/>
    <property type="match status" value="1"/>
</dbReference>
<dbReference type="Gene3D" id="3.30.1360.10">
    <property type="entry name" value="RNA polymerase, RBP11-like subunit"/>
    <property type="match status" value="1"/>
</dbReference>
<dbReference type="HAMAP" id="MF_00320">
    <property type="entry name" value="RNApol_arch_Rpo3"/>
    <property type="match status" value="1"/>
</dbReference>
<dbReference type="InterPro" id="IPR017896">
    <property type="entry name" value="4Fe4S_Fe-S-bd"/>
</dbReference>
<dbReference type="InterPro" id="IPR017900">
    <property type="entry name" value="4Fe4S_Fe_S_CS"/>
</dbReference>
<dbReference type="InterPro" id="IPR001514">
    <property type="entry name" value="DNA-dir_RNA_pol_30-40kDasu_CS"/>
</dbReference>
<dbReference type="InterPro" id="IPR011262">
    <property type="entry name" value="DNA-dir_RNA_pol_insert"/>
</dbReference>
<dbReference type="InterPro" id="IPR011263">
    <property type="entry name" value="DNA-dir_RNA_pol_RpoA/D/Rpb3"/>
</dbReference>
<dbReference type="InterPro" id="IPR036603">
    <property type="entry name" value="RBP11-like"/>
</dbReference>
<dbReference type="InterPro" id="IPR022842">
    <property type="entry name" value="RNAP_Rpo3/Rpb3/RPAC1"/>
</dbReference>
<dbReference type="InterPro" id="IPR036643">
    <property type="entry name" value="RNApol_insert_sf"/>
</dbReference>
<dbReference type="InterPro" id="IPR050518">
    <property type="entry name" value="Rpo3/RPB3_RNA_Pol_subunit"/>
</dbReference>
<dbReference type="NCBIfam" id="NF001988">
    <property type="entry name" value="PRK00783.1"/>
    <property type="match status" value="1"/>
</dbReference>
<dbReference type="PANTHER" id="PTHR11800">
    <property type="entry name" value="DNA-DIRECTED RNA POLYMERASE"/>
    <property type="match status" value="1"/>
</dbReference>
<dbReference type="PANTHER" id="PTHR11800:SF2">
    <property type="entry name" value="DNA-DIRECTED RNA POLYMERASE II SUBUNIT RPB3"/>
    <property type="match status" value="1"/>
</dbReference>
<dbReference type="Pfam" id="PF01000">
    <property type="entry name" value="RNA_pol_A_bac"/>
    <property type="match status" value="1"/>
</dbReference>
<dbReference type="Pfam" id="PF01193">
    <property type="entry name" value="RNA_pol_L"/>
    <property type="match status" value="1"/>
</dbReference>
<dbReference type="SMART" id="SM00662">
    <property type="entry name" value="RPOLD"/>
    <property type="match status" value="1"/>
</dbReference>
<dbReference type="SUPFAM" id="SSF56553">
    <property type="entry name" value="Insert subdomain of RNA polymerase alpha subunit"/>
    <property type="match status" value="1"/>
</dbReference>
<dbReference type="SUPFAM" id="SSF55257">
    <property type="entry name" value="RBP11-like subunits of RNA polymerase"/>
    <property type="match status" value="1"/>
</dbReference>
<dbReference type="PROSITE" id="PS00198">
    <property type="entry name" value="4FE4S_FER_1"/>
    <property type="match status" value="1"/>
</dbReference>
<dbReference type="PROSITE" id="PS51379">
    <property type="entry name" value="4FE4S_FER_2"/>
    <property type="match status" value="2"/>
</dbReference>
<dbReference type="PROSITE" id="PS00446">
    <property type="entry name" value="RNA_POL_D_30KD"/>
    <property type="match status" value="1"/>
</dbReference>